<sequence>MAATVRRQRPRRLLCWALVAVLLADLLALSDTLAVMSVDLGSESMKVAIVKPGVPMEIVLNKESRRKTPVTVTLKENERFLGDSAAGMAIKNPKATLRYFQHLLGKQADNPHVALYRSRFPEHELIVDPQRQTVRFQISPQLQFSPEEVLGMVLNYSRSLAEDFAEQPIKDAVITVPAFFNQAERRAVLQAARMAGLKVLQLINDNTATALSYGVFRRKDINSTAQNVMFYDMGSGSTVCTIVTYQTVKTKEAGMQPQLQIRGVGFDRTLGGLEMELRLREHLAKLFNEQRKGQKAKDVRENPRAMAKLLREANRLKTVLSANADHMAQIEGLMDDVDFKAKVTRVEFEELCADLFDRVPGPVQQALQSAEMSLDQIEQVILVGGATRVPKVQEVLLKAVGKEELGKNINADEAAAMGAVYQAAALSKAFKVKPFVVRDAVIYPILVEFTREVEEEPGLRSLKHNKRVLFSRMGPYPQRKVITFNRYSHDFNFHINYGDLGFLGPEDLRVFGSQNLTTVKLKGVGESFKKYPDYESKGIKAHFNLDESGVLSLDRVESVFETLVEDSPEEESTLTKLGNTISSLFGGGTSSDAKENGTDAVQEEEESPAEGSKDEPAEQGELKEEAEPPAEETSQPPPSEPKGDAAREGEKPDEKESGDKPEAQKPNEKGQAGPEGAAPAPEEDKKPKPARKQKMVEEIGVELAVLDLPDLPEDELARSVQKLEELTLRDLEKQEREKAANSLEAFIFETQDKLYQPEYQEVSTEEQREEISGKLSATSTWLEDEGFGATTVMLKDKLAELRKLCQGLFFRVEERRKWPERLSALDNLLNHSSIFLKGARLIPEMDQVFTEVEMTTLEKVINDTWAWKNATLAEQAKLPATEKPVLLSKDIEAKMMALDREVQYLLNKAKFTKPRPRPKDKNGTRAEPPLNASAGDQEEKVIPPAGQTEEAKPILEPDKEETGTEPADSEPLELGGPGAGPEQEEQSAGQKRPSKNDEL</sequence>
<dbReference type="EMBL" id="AF228709">
    <property type="protein sequence ID" value="AAF65544.1"/>
    <property type="molecule type" value="mRNA"/>
</dbReference>
<dbReference type="EMBL" id="AK171769">
    <property type="protein sequence ID" value="BAE42657.1"/>
    <property type="molecule type" value="mRNA"/>
</dbReference>
<dbReference type="EMBL" id="AK145857">
    <property type="protein sequence ID" value="BAE26702.1"/>
    <property type="molecule type" value="mRNA"/>
</dbReference>
<dbReference type="EMBL" id="AK155721">
    <property type="protein sequence ID" value="BAE33401.1"/>
    <property type="molecule type" value="mRNA"/>
</dbReference>
<dbReference type="EMBL" id="AK157949">
    <property type="protein sequence ID" value="BAE34279.1"/>
    <property type="molecule type" value="mRNA"/>
</dbReference>
<dbReference type="EMBL" id="BC050107">
    <property type="protein sequence ID" value="AAH50107.1"/>
    <property type="molecule type" value="mRNA"/>
</dbReference>
<dbReference type="EMBL" id="S78797">
    <property type="protein sequence ID" value="AAB35051.1"/>
    <property type="molecule type" value="mRNA"/>
</dbReference>
<dbReference type="CCDS" id="CCDS23107.1"/>
<dbReference type="RefSeq" id="NP_067370.3">
    <property type="nucleotide sequence ID" value="NM_021395.4"/>
</dbReference>
<dbReference type="RefSeq" id="XP_006510022.1">
    <property type="nucleotide sequence ID" value="XM_006509959.4"/>
</dbReference>
<dbReference type="RefSeq" id="XP_006510023.1">
    <property type="nucleotide sequence ID" value="XM_006509960.4"/>
</dbReference>
<dbReference type="RefSeq" id="XP_006510024.1">
    <property type="nucleotide sequence ID" value="XM_006509961.4"/>
</dbReference>
<dbReference type="SMR" id="Q9JKR6"/>
<dbReference type="BioGRID" id="198427">
    <property type="interactions" value="29"/>
</dbReference>
<dbReference type="CORUM" id="Q9JKR6"/>
<dbReference type="FunCoup" id="Q9JKR6">
    <property type="interactions" value="2803"/>
</dbReference>
<dbReference type="IntAct" id="Q9JKR6">
    <property type="interactions" value="2"/>
</dbReference>
<dbReference type="MINT" id="Q9JKR6"/>
<dbReference type="STRING" id="10090.ENSMUSP00000123700"/>
<dbReference type="GlyConnect" id="2376">
    <property type="glycosylation" value="18 N-Linked glycans (6 sites)"/>
</dbReference>
<dbReference type="GlyCosmos" id="Q9JKR6">
    <property type="glycosylation" value="9 sites, 18 glycans"/>
</dbReference>
<dbReference type="GlyGen" id="Q9JKR6">
    <property type="glycosylation" value="10 sites, 23 N-linked glycans (8 sites), 1 O-linked glycan (1 site)"/>
</dbReference>
<dbReference type="iPTMnet" id="Q9JKR6"/>
<dbReference type="PhosphoSitePlus" id="Q9JKR6"/>
<dbReference type="SwissPalm" id="Q9JKR6"/>
<dbReference type="REPRODUCTION-2DPAGE" id="IPI00123342"/>
<dbReference type="REPRODUCTION-2DPAGE" id="Q3TZD0"/>
<dbReference type="REPRODUCTION-2DPAGE" id="Q64139"/>
<dbReference type="REPRODUCTION-2DPAGE" id="Q9JKR6"/>
<dbReference type="CPTAC" id="non-CPTAC-3714"/>
<dbReference type="jPOST" id="Q9JKR6"/>
<dbReference type="PaxDb" id="10090-ENSMUSP00000068594"/>
<dbReference type="PeptideAtlas" id="Q9JKR6"/>
<dbReference type="ProteomicsDB" id="273064"/>
<dbReference type="Pumba" id="Q9JKR6"/>
<dbReference type="Antibodypedia" id="32575">
    <property type="antibodies" value="524 antibodies from 38 providers"/>
</dbReference>
<dbReference type="DNASU" id="12282"/>
<dbReference type="Ensembl" id="ENSMUST00000066601.13">
    <property type="protein sequence ID" value="ENSMUSP00000068594.7"/>
    <property type="gene ID" value="ENSMUSG00000032115.15"/>
</dbReference>
<dbReference type="Ensembl" id="ENSMUST00000160902.8">
    <property type="protein sequence ID" value="ENSMUSP00000125594.2"/>
    <property type="gene ID" value="ENSMUSG00000032115.15"/>
</dbReference>
<dbReference type="Ensembl" id="ENSMUST00000161318.8">
    <property type="protein sequence ID" value="ENSMUSP00000123700.2"/>
    <property type="gene ID" value="ENSMUSG00000032115.15"/>
</dbReference>
<dbReference type="GeneID" id="12282"/>
<dbReference type="KEGG" id="mmu:12282"/>
<dbReference type="UCSC" id="uc009pdf.2">
    <property type="organism name" value="mouse"/>
</dbReference>
<dbReference type="AGR" id="MGI:108030"/>
<dbReference type="CTD" id="10525"/>
<dbReference type="MGI" id="MGI:108030">
    <property type="gene designation" value="Hyou1"/>
</dbReference>
<dbReference type="VEuPathDB" id="HostDB:ENSMUSG00000032115"/>
<dbReference type="eggNOG" id="KOG0104">
    <property type="taxonomic scope" value="Eukaryota"/>
</dbReference>
<dbReference type="GeneTree" id="ENSGT00940000157686"/>
<dbReference type="HOGENOM" id="CLU_005965_5_0_1"/>
<dbReference type="InParanoid" id="Q9JKR6"/>
<dbReference type="OMA" id="SRTPMIQ"/>
<dbReference type="OrthoDB" id="10262720at2759"/>
<dbReference type="PhylomeDB" id="Q9JKR6"/>
<dbReference type="TreeFam" id="TF105048"/>
<dbReference type="BioGRID-ORCS" id="12282">
    <property type="hits" value="25 hits in 79 CRISPR screens"/>
</dbReference>
<dbReference type="ChiTaRS" id="Hyou1">
    <property type="organism name" value="mouse"/>
</dbReference>
<dbReference type="PRO" id="PR:Q9JKR6"/>
<dbReference type="Proteomes" id="UP000000589">
    <property type="component" value="Chromosome 9"/>
</dbReference>
<dbReference type="RNAct" id="Q9JKR6">
    <property type="molecule type" value="protein"/>
</dbReference>
<dbReference type="Bgee" id="ENSMUSG00000032115">
    <property type="expression patterns" value="Expressed in spermatocyte and 244 other cell types or tissues"/>
</dbReference>
<dbReference type="ExpressionAtlas" id="Q9JKR6">
    <property type="expression patterns" value="baseline and differential"/>
</dbReference>
<dbReference type="GO" id="GO:0034663">
    <property type="term" value="C:endoplasmic reticulum chaperone complex"/>
    <property type="evidence" value="ECO:0000314"/>
    <property type="project" value="ParkinsonsUK-UCL"/>
</dbReference>
<dbReference type="GO" id="GO:0005788">
    <property type="term" value="C:endoplasmic reticulum lumen"/>
    <property type="evidence" value="ECO:0007669"/>
    <property type="project" value="UniProtKB-SubCell"/>
</dbReference>
<dbReference type="GO" id="GO:0005576">
    <property type="term" value="C:extracellular region"/>
    <property type="evidence" value="ECO:0000304"/>
    <property type="project" value="Reactome"/>
</dbReference>
<dbReference type="GO" id="GO:0005739">
    <property type="term" value="C:mitochondrion"/>
    <property type="evidence" value="ECO:0007669"/>
    <property type="project" value="Ensembl"/>
</dbReference>
<dbReference type="GO" id="GO:0005524">
    <property type="term" value="F:ATP binding"/>
    <property type="evidence" value="ECO:0007669"/>
    <property type="project" value="UniProtKB-KW"/>
</dbReference>
<dbReference type="GO" id="GO:0140662">
    <property type="term" value="F:ATP-dependent protein folding chaperone"/>
    <property type="evidence" value="ECO:0007669"/>
    <property type="project" value="InterPro"/>
</dbReference>
<dbReference type="GO" id="GO:0071456">
    <property type="term" value="P:cellular response to hypoxia"/>
    <property type="evidence" value="ECO:0007669"/>
    <property type="project" value="Ensembl"/>
</dbReference>
<dbReference type="GO" id="GO:0006888">
    <property type="term" value="P:endoplasmic reticulum to Golgi vesicle-mediated transport"/>
    <property type="evidence" value="ECO:0007669"/>
    <property type="project" value="Ensembl"/>
</dbReference>
<dbReference type="GO" id="GO:0043066">
    <property type="term" value="P:negative regulation of apoptotic process"/>
    <property type="evidence" value="ECO:0000315"/>
    <property type="project" value="ParkinsonsUK-UCL"/>
</dbReference>
<dbReference type="GO" id="GO:1903382">
    <property type="term" value="P:negative regulation of endoplasmic reticulum stress-induced neuron intrinsic apoptotic signaling pathway"/>
    <property type="evidence" value="ECO:0000315"/>
    <property type="project" value="ParkinsonsUK-UCL"/>
</dbReference>
<dbReference type="GO" id="GO:1903298">
    <property type="term" value="P:negative regulation of hypoxia-induced intrinsic apoptotic signaling pathway"/>
    <property type="evidence" value="ECO:0007669"/>
    <property type="project" value="Ensembl"/>
</dbReference>
<dbReference type="GO" id="GO:0034976">
    <property type="term" value="P:response to endoplasmic reticulum stress"/>
    <property type="evidence" value="ECO:0007669"/>
    <property type="project" value="Ensembl"/>
</dbReference>
<dbReference type="GO" id="GO:0002931">
    <property type="term" value="P:response to ischemia"/>
    <property type="evidence" value="ECO:0000314"/>
    <property type="project" value="ParkinsonsUK-UCL"/>
</dbReference>
<dbReference type="CDD" id="cd10230">
    <property type="entry name" value="ASKHA_NBD_HSP70_HYOU1"/>
    <property type="match status" value="1"/>
</dbReference>
<dbReference type="FunFam" id="1.20.1270.10:FF:000013">
    <property type="entry name" value="Hypoxia up-regulated protein 1"/>
    <property type="match status" value="1"/>
</dbReference>
<dbReference type="FunFam" id="2.60.34.10:FF:000009">
    <property type="entry name" value="Hypoxia up-regulated protein 1"/>
    <property type="match status" value="1"/>
</dbReference>
<dbReference type="FunFam" id="3.90.640.10:FF:000012">
    <property type="entry name" value="Hypoxia up-regulated protein 1"/>
    <property type="match status" value="1"/>
</dbReference>
<dbReference type="FunFam" id="3.30.30.30:FF:000004">
    <property type="entry name" value="hypoxia up-regulated protein 1"/>
    <property type="match status" value="1"/>
</dbReference>
<dbReference type="Gene3D" id="1.20.1270.10">
    <property type="match status" value="1"/>
</dbReference>
<dbReference type="Gene3D" id="3.30.30.30">
    <property type="match status" value="1"/>
</dbReference>
<dbReference type="Gene3D" id="3.30.420.40">
    <property type="match status" value="2"/>
</dbReference>
<dbReference type="Gene3D" id="3.90.640.10">
    <property type="entry name" value="Actin, Chain A, domain 4"/>
    <property type="match status" value="1"/>
</dbReference>
<dbReference type="Gene3D" id="2.60.34.10">
    <property type="entry name" value="Substrate Binding Domain Of DNAk, Chain A, domain 1"/>
    <property type="match status" value="1"/>
</dbReference>
<dbReference type="InterPro" id="IPR043129">
    <property type="entry name" value="ATPase_NBD"/>
</dbReference>
<dbReference type="InterPro" id="IPR018181">
    <property type="entry name" value="Heat_shock_70_CS"/>
</dbReference>
<dbReference type="InterPro" id="IPR029048">
    <property type="entry name" value="HSP70_C_sf"/>
</dbReference>
<dbReference type="InterPro" id="IPR029047">
    <property type="entry name" value="HSP70_peptide-bd_sf"/>
</dbReference>
<dbReference type="InterPro" id="IPR013126">
    <property type="entry name" value="Hsp_70_fam"/>
</dbReference>
<dbReference type="PANTHER" id="PTHR45639">
    <property type="entry name" value="HSC70CB, ISOFORM G-RELATED"/>
    <property type="match status" value="1"/>
</dbReference>
<dbReference type="PANTHER" id="PTHR45639:SF3">
    <property type="entry name" value="HYPOXIA UP-REGULATED PROTEIN 1"/>
    <property type="match status" value="1"/>
</dbReference>
<dbReference type="Pfam" id="PF00012">
    <property type="entry name" value="HSP70"/>
    <property type="match status" value="1"/>
</dbReference>
<dbReference type="PRINTS" id="PR00301">
    <property type="entry name" value="HEATSHOCK70"/>
</dbReference>
<dbReference type="SUPFAM" id="SSF53067">
    <property type="entry name" value="Actin-like ATPase domain"/>
    <property type="match status" value="2"/>
</dbReference>
<dbReference type="SUPFAM" id="SSF100934">
    <property type="entry name" value="Heat shock protein 70kD (HSP70), C-terminal subdomain"/>
    <property type="match status" value="1"/>
</dbReference>
<dbReference type="PROSITE" id="PS00329">
    <property type="entry name" value="HSP70_2"/>
    <property type="match status" value="1"/>
</dbReference>
<dbReference type="PROSITE" id="PS01036">
    <property type="entry name" value="HSP70_3"/>
    <property type="match status" value="1"/>
</dbReference>
<protein>
    <recommendedName>
        <fullName>Hypoxia up-regulated protein 1</fullName>
        <shortName>GRP-170</shortName>
    </recommendedName>
    <alternativeName>
        <fullName>140 kDa Ca(2+)-binding protein</fullName>
        <shortName>CBP-140</shortName>
    </alternativeName>
</protein>
<proteinExistence type="evidence at protein level"/>
<gene>
    <name type="primary">Hyou1</name>
    <name type="synonym">Grp170</name>
    <name evidence="2" type="synonym">Hsph4</name>
</gene>
<comment type="function">
    <text evidence="1 6">Has a pivotal role in cytoprotective cellular mechanisms triggered by oxygen deprivation. Promotes HSPA5/BiP-mediated ATP nucleotide exchange and thereby activates the unfolded protein response (UPR) pathway in the presence of endoplasmic reticulum stress (PubMed:30710085). May play a role as a molecular chaperone and participate in protein folding (By similarity).</text>
</comment>
<comment type="subunit">
    <text>Part of a large chaperone multiprotein complex comprising DNAJB11, HSP90B1, HSPA5, HYOU, PDIA2, PDIA4, PDIA6, PPIB, SDF2L1, UGGT1 and very small amounts of ERP29, but not, or at very low levels, CALR nor CANX.</text>
</comment>
<comment type="subcellular location">
    <subcellularLocation>
        <location evidence="7">Endoplasmic reticulum lumen</location>
    </subcellularLocation>
</comment>
<comment type="similarity">
    <text evidence="8">Belongs to the heat shock protein 70 family.</text>
</comment>
<reference key="1">
    <citation type="submission" date="2000-01" db="EMBL/GenBank/DDBJ databases">
        <title>The 170 kDa glucose regulated protein of mouse.</title>
        <authorList>
            <person name="Chen X."/>
            <person name="Easton D.P."/>
            <person name="Subjeck J.R."/>
        </authorList>
    </citation>
    <scope>NUCLEOTIDE SEQUENCE [MRNA]</scope>
</reference>
<reference key="2">
    <citation type="journal article" date="2005" name="Science">
        <title>The transcriptional landscape of the mammalian genome.</title>
        <authorList>
            <person name="Carninci P."/>
            <person name="Kasukawa T."/>
            <person name="Katayama S."/>
            <person name="Gough J."/>
            <person name="Frith M.C."/>
            <person name="Maeda N."/>
            <person name="Oyama R."/>
            <person name="Ravasi T."/>
            <person name="Lenhard B."/>
            <person name="Wells C."/>
            <person name="Kodzius R."/>
            <person name="Shimokawa K."/>
            <person name="Bajic V.B."/>
            <person name="Brenner S.E."/>
            <person name="Batalov S."/>
            <person name="Forrest A.R."/>
            <person name="Zavolan M."/>
            <person name="Davis M.J."/>
            <person name="Wilming L.G."/>
            <person name="Aidinis V."/>
            <person name="Allen J.E."/>
            <person name="Ambesi-Impiombato A."/>
            <person name="Apweiler R."/>
            <person name="Aturaliya R.N."/>
            <person name="Bailey T.L."/>
            <person name="Bansal M."/>
            <person name="Baxter L."/>
            <person name="Beisel K.W."/>
            <person name="Bersano T."/>
            <person name="Bono H."/>
            <person name="Chalk A.M."/>
            <person name="Chiu K.P."/>
            <person name="Choudhary V."/>
            <person name="Christoffels A."/>
            <person name="Clutterbuck D.R."/>
            <person name="Crowe M.L."/>
            <person name="Dalla E."/>
            <person name="Dalrymple B.P."/>
            <person name="de Bono B."/>
            <person name="Della Gatta G."/>
            <person name="di Bernardo D."/>
            <person name="Down T."/>
            <person name="Engstrom P."/>
            <person name="Fagiolini M."/>
            <person name="Faulkner G."/>
            <person name="Fletcher C.F."/>
            <person name="Fukushima T."/>
            <person name="Furuno M."/>
            <person name="Futaki S."/>
            <person name="Gariboldi M."/>
            <person name="Georgii-Hemming P."/>
            <person name="Gingeras T.R."/>
            <person name="Gojobori T."/>
            <person name="Green R.E."/>
            <person name="Gustincich S."/>
            <person name="Harbers M."/>
            <person name="Hayashi Y."/>
            <person name="Hensch T.K."/>
            <person name="Hirokawa N."/>
            <person name="Hill D."/>
            <person name="Huminiecki L."/>
            <person name="Iacono M."/>
            <person name="Ikeo K."/>
            <person name="Iwama A."/>
            <person name="Ishikawa T."/>
            <person name="Jakt M."/>
            <person name="Kanapin A."/>
            <person name="Katoh M."/>
            <person name="Kawasawa Y."/>
            <person name="Kelso J."/>
            <person name="Kitamura H."/>
            <person name="Kitano H."/>
            <person name="Kollias G."/>
            <person name="Krishnan S.P."/>
            <person name="Kruger A."/>
            <person name="Kummerfeld S.K."/>
            <person name="Kurochkin I.V."/>
            <person name="Lareau L.F."/>
            <person name="Lazarevic D."/>
            <person name="Lipovich L."/>
            <person name="Liu J."/>
            <person name="Liuni S."/>
            <person name="McWilliam S."/>
            <person name="Madan Babu M."/>
            <person name="Madera M."/>
            <person name="Marchionni L."/>
            <person name="Matsuda H."/>
            <person name="Matsuzawa S."/>
            <person name="Miki H."/>
            <person name="Mignone F."/>
            <person name="Miyake S."/>
            <person name="Morris K."/>
            <person name="Mottagui-Tabar S."/>
            <person name="Mulder N."/>
            <person name="Nakano N."/>
            <person name="Nakauchi H."/>
            <person name="Ng P."/>
            <person name="Nilsson R."/>
            <person name="Nishiguchi S."/>
            <person name="Nishikawa S."/>
            <person name="Nori F."/>
            <person name="Ohara O."/>
            <person name="Okazaki Y."/>
            <person name="Orlando V."/>
            <person name="Pang K.C."/>
            <person name="Pavan W.J."/>
            <person name="Pavesi G."/>
            <person name="Pesole G."/>
            <person name="Petrovsky N."/>
            <person name="Piazza S."/>
            <person name="Reed J."/>
            <person name="Reid J.F."/>
            <person name="Ring B.Z."/>
            <person name="Ringwald M."/>
            <person name="Rost B."/>
            <person name="Ruan Y."/>
            <person name="Salzberg S.L."/>
            <person name="Sandelin A."/>
            <person name="Schneider C."/>
            <person name="Schoenbach C."/>
            <person name="Sekiguchi K."/>
            <person name="Semple C.A."/>
            <person name="Seno S."/>
            <person name="Sessa L."/>
            <person name="Sheng Y."/>
            <person name="Shibata Y."/>
            <person name="Shimada H."/>
            <person name="Shimada K."/>
            <person name="Silva D."/>
            <person name="Sinclair B."/>
            <person name="Sperling S."/>
            <person name="Stupka E."/>
            <person name="Sugiura K."/>
            <person name="Sultana R."/>
            <person name="Takenaka Y."/>
            <person name="Taki K."/>
            <person name="Tammoja K."/>
            <person name="Tan S.L."/>
            <person name="Tang S."/>
            <person name="Taylor M.S."/>
            <person name="Tegner J."/>
            <person name="Teichmann S.A."/>
            <person name="Ueda H.R."/>
            <person name="van Nimwegen E."/>
            <person name="Verardo R."/>
            <person name="Wei C.L."/>
            <person name="Yagi K."/>
            <person name="Yamanishi H."/>
            <person name="Zabarovsky E."/>
            <person name="Zhu S."/>
            <person name="Zimmer A."/>
            <person name="Hide W."/>
            <person name="Bult C."/>
            <person name="Grimmond S.M."/>
            <person name="Teasdale R.D."/>
            <person name="Liu E.T."/>
            <person name="Brusic V."/>
            <person name="Quackenbush J."/>
            <person name="Wahlestedt C."/>
            <person name="Mattick J.S."/>
            <person name="Hume D.A."/>
            <person name="Kai C."/>
            <person name="Sasaki D."/>
            <person name="Tomaru Y."/>
            <person name="Fukuda S."/>
            <person name="Kanamori-Katayama M."/>
            <person name="Suzuki M."/>
            <person name="Aoki J."/>
            <person name="Arakawa T."/>
            <person name="Iida J."/>
            <person name="Imamura K."/>
            <person name="Itoh M."/>
            <person name="Kato T."/>
            <person name="Kawaji H."/>
            <person name="Kawagashira N."/>
            <person name="Kawashima T."/>
            <person name="Kojima M."/>
            <person name="Kondo S."/>
            <person name="Konno H."/>
            <person name="Nakano K."/>
            <person name="Ninomiya N."/>
            <person name="Nishio T."/>
            <person name="Okada M."/>
            <person name="Plessy C."/>
            <person name="Shibata K."/>
            <person name="Shiraki T."/>
            <person name="Suzuki S."/>
            <person name="Tagami M."/>
            <person name="Waki K."/>
            <person name="Watahiki A."/>
            <person name="Okamura-Oho Y."/>
            <person name="Suzuki H."/>
            <person name="Kawai J."/>
            <person name="Hayashizaki Y."/>
        </authorList>
    </citation>
    <scope>NUCLEOTIDE SEQUENCE [LARGE SCALE MRNA]</scope>
    <source>
        <strain>C57BL/6J</strain>
        <strain>NOD</strain>
        <tissue>Inner ear</tissue>
        <tissue>Placenta</tissue>
        <tissue>Spleen</tissue>
    </source>
</reference>
<reference key="3">
    <citation type="journal article" date="2004" name="Genome Res.">
        <title>The status, quality, and expansion of the NIH full-length cDNA project: the Mammalian Gene Collection (MGC).</title>
        <authorList>
            <consortium name="The MGC Project Team"/>
        </authorList>
    </citation>
    <scope>NUCLEOTIDE SEQUENCE [LARGE SCALE MRNA]</scope>
    <source>
        <strain>C57BL/6J</strain>
        <tissue>Embryo</tissue>
    </source>
</reference>
<reference key="4">
    <citation type="journal article" date="1995" name="Cell Struct. Funct.">
        <title>CBP-140, a novel endoplasmic reticulum resident Ca(2+)-binding protein with a carboxy-terminal NDEL sequence showed partial homology with 70-kDa heat shock protein (hsp70).</title>
        <authorList>
            <person name="Naved A.F."/>
            <person name="Ozawa M."/>
            <person name="Yu S."/>
            <person name="Miyauchi T."/>
            <person name="Muramatsu H."/>
            <person name="Muramatsu T."/>
        </authorList>
    </citation>
    <scope>NUCLEOTIDE SEQUENCE [MRNA] OF 347-999</scope>
    <scope>SUBCELLULAR LOCATION</scope>
</reference>
<reference key="5">
    <citation type="submission" date="2007-07" db="UniProtKB">
        <authorList>
            <person name="Lubec G."/>
            <person name="Yang J.W."/>
            <person name="Zigmond M."/>
        </authorList>
    </citation>
    <scope>PROTEIN SEQUENCE OF 439-451</scope>
    <source>
        <tissue>Brain</tissue>
    </source>
</reference>
<reference key="6">
    <citation type="journal article" date="2002" name="Mol. Biol. Cell">
        <title>A subset of chaperones and folding enzymes form multiprotein complexes in endoplasmic reticulum to bind nascent proteins.</title>
        <authorList>
            <person name="Meunier L."/>
            <person name="Usherwood Y.-K."/>
            <person name="Chung K.T."/>
            <person name="Hendershot L.M."/>
        </authorList>
    </citation>
    <scope>COMPONENT OF A CHAPERONE COMPLEX</scope>
</reference>
<reference key="7">
    <citation type="journal article" date="2009" name="Nat. Biotechnol.">
        <title>Mass-spectrometric identification and relative quantification of N-linked cell surface glycoproteins.</title>
        <authorList>
            <person name="Wollscheid B."/>
            <person name="Bausch-Fluck D."/>
            <person name="Henderson C."/>
            <person name="O'Brien R."/>
            <person name="Bibel M."/>
            <person name="Schiess R."/>
            <person name="Aebersold R."/>
            <person name="Watts J.D."/>
        </authorList>
    </citation>
    <scope>GLYCOSYLATION [LARGE SCALE ANALYSIS] AT ASN-515</scope>
</reference>
<reference key="8">
    <citation type="journal article" date="2010" name="Cell">
        <title>A tissue-specific atlas of mouse protein phosphorylation and expression.</title>
        <authorList>
            <person name="Huttlin E.L."/>
            <person name="Jedrychowski M.P."/>
            <person name="Elias J.E."/>
            <person name="Goswami T."/>
            <person name="Rad R."/>
            <person name="Beausoleil S.A."/>
            <person name="Villen J."/>
            <person name="Haas W."/>
            <person name="Sowa M.E."/>
            <person name="Gygi S.P."/>
        </authorList>
    </citation>
    <scope>IDENTIFICATION BY MASS SPECTROMETRY [LARGE SCALE ANALYSIS]</scope>
    <source>
        <tissue>Brain</tissue>
        <tissue>Brown adipose tissue</tissue>
        <tissue>Heart</tissue>
        <tissue>Kidney</tissue>
        <tissue>Liver</tissue>
        <tissue>Lung</tissue>
        <tissue>Pancreas</tissue>
        <tissue>Spleen</tissue>
        <tissue>Testis</tissue>
    </source>
</reference>
<reference key="9">
    <citation type="journal article" date="2013" name="Mol. Cell">
        <title>SIRT5-mediated lysine desuccinylation impacts diverse metabolic pathways.</title>
        <authorList>
            <person name="Park J."/>
            <person name="Chen Y."/>
            <person name="Tishkoff D.X."/>
            <person name="Peng C."/>
            <person name="Tan M."/>
            <person name="Dai L."/>
            <person name="Xie Z."/>
            <person name="Zhang Y."/>
            <person name="Zwaans B.M."/>
            <person name="Skinner M.E."/>
            <person name="Lombard D.B."/>
            <person name="Zhao Y."/>
        </authorList>
    </citation>
    <scope>ACETYLATION [LARGE SCALE ANALYSIS] AT LYS-883</scope>
    <scope>IDENTIFICATION BY MASS SPECTROMETRY [LARGE SCALE ANALYSIS]</scope>
    <source>
        <tissue>Embryonic fibroblast</tissue>
    </source>
</reference>
<reference key="10">
    <citation type="journal article" date="2019" name="Nat. Commun.">
        <title>MANF antagonizes nucleotide exchange by the endoplasmic reticulum chaperone BiP.</title>
        <authorList>
            <person name="Yan Y."/>
            <person name="Rato C."/>
            <person name="Rohland L."/>
            <person name="Preissler S."/>
            <person name="Ron D."/>
        </authorList>
    </citation>
    <scope>FUNCTION</scope>
</reference>
<keyword id="KW-0007">Acetylation</keyword>
<keyword id="KW-0067">ATP-binding</keyword>
<keyword id="KW-0143">Chaperone</keyword>
<keyword id="KW-0903">Direct protein sequencing</keyword>
<keyword id="KW-0256">Endoplasmic reticulum</keyword>
<keyword id="KW-0325">Glycoprotein</keyword>
<keyword id="KW-0547">Nucleotide-binding</keyword>
<keyword id="KW-0597">Phosphoprotein</keyword>
<keyword id="KW-1185">Reference proteome</keyword>
<keyword id="KW-0732">Signal</keyword>
<keyword id="KW-0346">Stress response</keyword>
<name>HYOU1_MOUSE</name>
<evidence type="ECO:0000250" key="1"/>
<evidence type="ECO:0000250" key="2">
    <source>
        <dbReference type="UniProtKB" id="Q9Y4L1"/>
    </source>
</evidence>
<evidence type="ECO:0000255" key="3"/>
<evidence type="ECO:0000256" key="4">
    <source>
        <dbReference type="SAM" id="MobiDB-lite"/>
    </source>
</evidence>
<evidence type="ECO:0000269" key="5">
    <source>
    </source>
</evidence>
<evidence type="ECO:0000269" key="6">
    <source>
    </source>
</evidence>
<evidence type="ECO:0000269" key="7">
    <source>
    </source>
</evidence>
<evidence type="ECO:0000305" key="8"/>
<evidence type="ECO:0007744" key="9">
    <source>
    </source>
</evidence>
<feature type="signal peptide" evidence="1">
    <location>
        <begin position="1"/>
        <end position="32"/>
    </location>
</feature>
<feature type="chain" id="PRO_5000057827" description="Hypoxia up-regulated protein 1">
    <location>
        <begin position="33"/>
        <end position="999"/>
    </location>
</feature>
<feature type="region of interest" description="Disordered" evidence="4">
    <location>
        <begin position="567"/>
        <end position="694"/>
    </location>
</feature>
<feature type="region of interest" description="Disordered" evidence="4">
    <location>
        <begin position="909"/>
        <end position="999"/>
    </location>
</feature>
<feature type="short sequence motif" description="Prevents secretion from ER" evidence="3">
    <location>
        <begin position="996"/>
        <end position="999"/>
    </location>
</feature>
<feature type="compositionally biased region" description="Polar residues" evidence="4">
    <location>
        <begin position="574"/>
        <end position="583"/>
    </location>
</feature>
<feature type="compositionally biased region" description="Basic and acidic residues" evidence="4">
    <location>
        <begin position="611"/>
        <end position="626"/>
    </location>
</feature>
<feature type="compositionally biased region" description="Basic and acidic residues" evidence="4">
    <location>
        <begin position="641"/>
        <end position="668"/>
    </location>
</feature>
<feature type="compositionally biased region" description="Low complexity" evidence="4">
    <location>
        <begin position="669"/>
        <end position="680"/>
    </location>
</feature>
<feature type="compositionally biased region" description="Basic and acidic residues" evidence="4">
    <location>
        <begin position="949"/>
        <end position="962"/>
    </location>
</feature>
<feature type="modified residue" description="Phosphoserine" evidence="2">
    <location>
        <position position="567"/>
    </location>
</feature>
<feature type="modified residue" description="N6-acetyllysine" evidence="9">
    <location>
        <position position="883"/>
    </location>
</feature>
<feature type="glycosylation site" description="N-linked (GlcNAc...) asparagine" evidence="3">
    <location>
        <position position="155"/>
    </location>
</feature>
<feature type="glycosylation site" description="N-linked (GlcNAc...) asparagine" evidence="3">
    <location>
        <position position="222"/>
    </location>
</feature>
<feature type="glycosylation site" description="N-linked (GlcNAc...) asparagine" evidence="5">
    <location>
        <position position="515"/>
    </location>
</feature>
<feature type="glycosylation site" description="N-linked (GlcNAc...) asparagine" evidence="3">
    <location>
        <position position="596"/>
    </location>
</feature>
<feature type="glycosylation site" description="N-linked (GlcNAc...) asparagine" evidence="3">
    <location>
        <position position="830"/>
    </location>
</feature>
<feature type="glycosylation site" description="N-linked (GlcNAc...) asparagine" evidence="3">
    <location>
        <position position="862"/>
    </location>
</feature>
<feature type="glycosylation site" description="N-linked (GlcNAc...) asparagine" evidence="3">
    <location>
        <position position="869"/>
    </location>
</feature>
<feature type="glycosylation site" description="N-linked (GlcNAc...) asparagine" evidence="3">
    <location>
        <position position="922"/>
    </location>
</feature>
<feature type="glycosylation site" description="N-linked (GlcNAc...) asparagine" evidence="3">
    <location>
        <position position="931"/>
    </location>
</feature>
<feature type="sequence conflict" description="In Ref. 3; AAH50107." evidence="8" ref="3">
    <original>Q</original>
    <variation>L</variation>
    <location>
        <position position="137"/>
    </location>
</feature>
<feature type="sequence conflict" description="In Ref. 3; AAH50107." evidence="8" ref="3">
    <original>N</original>
    <variation>D</variation>
    <location>
        <position position="227"/>
    </location>
</feature>
<feature type="sequence conflict" description="In Ref. 2; BAE34279." evidence="8" ref="2">
    <original>T</original>
    <variation>A</variation>
    <location>
        <position position="247"/>
    </location>
</feature>
<feature type="sequence conflict" description="In Ref. 2; BAE42657." evidence="8" ref="2">
    <original>Q</original>
    <variation>R</variation>
    <location>
        <position position="290"/>
    </location>
</feature>
<feature type="sequence conflict" description="In Ref. 4; AAB35051." evidence="8" ref="4">
    <original>R</original>
    <variation>G</variation>
    <location>
        <position position="467"/>
    </location>
</feature>
<feature type="sequence conflict" description="In Ref. 3; AAH50107." evidence="8" ref="3">
    <original>K</original>
    <variation>R</variation>
    <location>
        <position position="540"/>
    </location>
</feature>
<feature type="sequence conflict" description="In Ref. 3; AAH50107." evidence="8" ref="3">
    <original>E</original>
    <variation>K</variation>
    <location>
        <position position="615"/>
    </location>
</feature>
<feature type="sequence conflict" description="In Ref. 4; AAB35051." evidence="8" ref="4">
    <location>
        <position position="665"/>
    </location>
</feature>
<feature type="sequence conflict" description="In Ref. 4; AAB35051." evidence="8" ref="4">
    <original>P</original>
    <variation>L</variation>
    <location>
        <position position="687"/>
    </location>
</feature>
<feature type="sequence conflict" description="In Ref. 4; AAB35051." evidence="8" ref="4">
    <original>D</original>
    <variation>N</variation>
    <location>
        <position position="710"/>
    </location>
</feature>
<feature type="sequence conflict" description="In Ref. 3; AAH50107." evidence="8" ref="3">
    <original>Q</original>
    <variation>R</variation>
    <location>
        <position position="734"/>
    </location>
</feature>
<feature type="sequence conflict" description="In Ref. 3; AAH50107." evidence="8" ref="3">
    <original>E</original>
    <variation>K</variation>
    <location>
        <position position="744"/>
    </location>
</feature>
<feature type="sequence conflict" description="In Ref. 3; AAH50107." evidence="8" ref="3">
    <original>S</original>
    <variation>P</variation>
    <location>
        <position position="772"/>
    </location>
</feature>
<accession>Q9JKR6</accession>
<accession>Q3TAL1</accession>
<accession>Q3TZD0</accession>
<accession>Q3U1U2</accession>
<accession>Q64139</accession>
<accession>Q80X75</accession>
<organism>
    <name type="scientific">Mus musculus</name>
    <name type="common">Mouse</name>
    <dbReference type="NCBI Taxonomy" id="10090"/>
    <lineage>
        <taxon>Eukaryota</taxon>
        <taxon>Metazoa</taxon>
        <taxon>Chordata</taxon>
        <taxon>Craniata</taxon>
        <taxon>Vertebrata</taxon>
        <taxon>Euteleostomi</taxon>
        <taxon>Mammalia</taxon>
        <taxon>Eutheria</taxon>
        <taxon>Euarchontoglires</taxon>
        <taxon>Glires</taxon>
        <taxon>Rodentia</taxon>
        <taxon>Myomorpha</taxon>
        <taxon>Muroidea</taxon>
        <taxon>Muridae</taxon>
        <taxon>Murinae</taxon>
        <taxon>Mus</taxon>
        <taxon>Mus</taxon>
    </lineage>
</organism>